<organism>
    <name type="scientific">Ureaplasma parvum serovar 3 (strain ATCC 27815 / 27 / NCTC 11736)</name>
    <dbReference type="NCBI Taxonomy" id="505682"/>
    <lineage>
        <taxon>Bacteria</taxon>
        <taxon>Bacillati</taxon>
        <taxon>Mycoplasmatota</taxon>
        <taxon>Mycoplasmoidales</taxon>
        <taxon>Mycoplasmoidaceae</taxon>
        <taxon>Ureaplasma</taxon>
    </lineage>
</organism>
<proteinExistence type="inferred from homology"/>
<comment type="function">
    <text evidence="1">Involved in protein export. Acts as a chaperone by maintaining the newly synthesized protein in an open conformation. Functions as a peptidyl-prolyl cis-trans isomerase.</text>
</comment>
<comment type="catalytic activity">
    <reaction evidence="1">
        <text>[protein]-peptidylproline (omega=180) = [protein]-peptidylproline (omega=0)</text>
        <dbReference type="Rhea" id="RHEA:16237"/>
        <dbReference type="Rhea" id="RHEA-COMP:10747"/>
        <dbReference type="Rhea" id="RHEA-COMP:10748"/>
        <dbReference type="ChEBI" id="CHEBI:83833"/>
        <dbReference type="ChEBI" id="CHEBI:83834"/>
        <dbReference type="EC" id="5.2.1.8"/>
    </reaction>
</comment>
<comment type="subcellular location">
    <subcellularLocation>
        <location>Cytoplasm</location>
    </subcellularLocation>
    <text evidence="1">About half TF is bound to the ribosome near the polypeptide exit tunnel while the other half is free in the cytoplasm.</text>
</comment>
<comment type="domain">
    <text evidence="1">Consists of 3 domains; the N-terminus binds the ribosome, the middle domain has PPIase activity, while the C-terminus has intrinsic chaperone activity on its own.</text>
</comment>
<comment type="similarity">
    <text evidence="1">Belongs to the FKBP-type PPIase family. Tig subfamily.</text>
</comment>
<keyword id="KW-0131">Cell cycle</keyword>
<keyword id="KW-0132">Cell division</keyword>
<keyword id="KW-0143">Chaperone</keyword>
<keyword id="KW-0963">Cytoplasm</keyword>
<keyword id="KW-0413">Isomerase</keyword>
<keyword id="KW-0697">Rotamase</keyword>
<evidence type="ECO:0000255" key="1">
    <source>
        <dbReference type="HAMAP-Rule" id="MF_00303"/>
    </source>
</evidence>
<name>TIG_UREP2</name>
<feature type="chain" id="PRO_1000079064" description="Trigger factor">
    <location>
        <begin position="1"/>
        <end position="449"/>
    </location>
</feature>
<feature type="domain" description="PPIase FKBP-type" evidence="1">
    <location>
        <begin position="172"/>
        <end position="257"/>
    </location>
</feature>
<dbReference type="EC" id="5.2.1.8" evidence="1"/>
<dbReference type="EMBL" id="CP000942">
    <property type="protein sequence ID" value="ACA33011.1"/>
    <property type="molecule type" value="Genomic_DNA"/>
</dbReference>
<dbReference type="RefSeq" id="WP_006689135.1">
    <property type="nucleotide sequence ID" value="NC_010503.1"/>
</dbReference>
<dbReference type="SMR" id="B1AIY6"/>
<dbReference type="GeneID" id="29672387"/>
<dbReference type="KEGG" id="upa:UPA3_0363"/>
<dbReference type="HOGENOM" id="CLU_033058_3_2_14"/>
<dbReference type="Proteomes" id="UP000002162">
    <property type="component" value="Chromosome"/>
</dbReference>
<dbReference type="GO" id="GO:0005737">
    <property type="term" value="C:cytoplasm"/>
    <property type="evidence" value="ECO:0007669"/>
    <property type="project" value="UniProtKB-SubCell"/>
</dbReference>
<dbReference type="GO" id="GO:0003755">
    <property type="term" value="F:peptidyl-prolyl cis-trans isomerase activity"/>
    <property type="evidence" value="ECO:0007669"/>
    <property type="project" value="UniProtKB-UniRule"/>
</dbReference>
<dbReference type="GO" id="GO:0044183">
    <property type="term" value="F:protein folding chaperone"/>
    <property type="evidence" value="ECO:0007669"/>
    <property type="project" value="TreeGrafter"/>
</dbReference>
<dbReference type="GO" id="GO:0043022">
    <property type="term" value="F:ribosome binding"/>
    <property type="evidence" value="ECO:0007669"/>
    <property type="project" value="TreeGrafter"/>
</dbReference>
<dbReference type="GO" id="GO:0051083">
    <property type="term" value="P:'de novo' cotranslational protein folding"/>
    <property type="evidence" value="ECO:0007669"/>
    <property type="project" value="TreeGrafter"/>
</dbReference>
<dbReference type="GO" id="GO:0051301">
    <property type="term" value="P:cell division"/>
    <property type="evidence" value="ECO:0007669"/>
    <property type="project" value="UniProtKB-KW"/>
</dbReference>
<dbReference type="GO" id="GO:0061077">
    <property type="term" value="P:chaperone-mediated protein folding"/>
    <property type="evidence" value="ECO:0007669"/>
    <property type="project" value="TreeGrafter"/>
</dbReference>
<dbReference type="GO" id="GO:0015031">
    <property type="term" value="P:protein transport"/>
    <property type="evidence" value="ECO:0007669"/>
    <property type="project" value="UniProtKB-UniRule"/>
</dbReference>
<dbReference type="GO" id="GO:0043335">
    <property type="term" value="P:protein unfolding"/>
    <property type="evidence" value="ECO:0007669"/>
    <property type="project" value="TreeGrafter"/>
</dbReference>
<dbReference type="FunFam" id="3.10.50.40:FF:000001">
    <property type="entry name" value="Trigger factor"/>
    <property type="match status" value="1"/>
</dbReference>
<dbReference type="Gene3D" id="3.10.50.40">
    <property type="match status" value="1"/>
</dbReference>
<dbReference type="Gene3D" id="3.30.70.1050">
    <property type="entry name" value="Trigger factor ribosome-binding domain"/>
    <property type="match status" value="1"/>
</dbReference>
<dbReference type="Gene3D" id="1.10.3120.10">
    <property type="entry name" value="Trigger factor, C-terminal domain"/>
    <property type="match status" value="1"/>
</dbReference>
<dbReference type="HAMAP" id="MF_00303">
    <property type="entry name" value="Trigger_factor_Tig"/>
    <property type="match status" value="1"/>
</dbReference>
<dbReference type="InterPro" id="IPR046357">
    <property type="entry name" value="PPIase_dom_sf"/>
</dbReference>
<dbReference type="InterPro" id="IPR001179">
    <property type="entry name" value="PPIase_FKBP_dom"/>
</dbReference>
<dbReference type="InterPro" id="IPR005215">
    <property type="entry name" value="Trig_fac"/>
</dbReference>
<dbReference type="InterPro" id="IPR008880">
    <property type="entry name" value="Trigger_fac_C"/>
</dbReference>
<dbReference type="InterPro" id="IPR037041">
    <property type="entry name" value="Trigger_fac_C_sf"/>
</dbReference>
<dbReference type="InterPro" id="IPR008881">
    <property type="entry name" value="Trigger_fac_ribosome-bd_bac"/>
</dbReference>
<dbReference type="InterPro" id="IPR036611">
    <property type="entry name" value="Trigger_fac_ribosome-bd_sf"/>
</dbReference>
<dbReference type="InterPro" id="IPR027304">
    <property type="entry name" value="Trigger_fact/SurA_dom_sf"/>
</dbReference>
<dbReference type="NCBIfam" id="TIGR00115">
    <property type="entry name" value="tig"/>
    <property type="match status" value="1"/>
</dbReference>
<dbReference type="PANTHER" id="PTHR30560">
    <property type="entry name" value="TRIGGER FACTOR CHAPERONE AND PEPTIDYL-PROLYL CIS/TRANS ISOMERASE"/>
    <property type="match status" value="1"/>
</dbReference>
<dbReference type="PANTHER" id="PTHR30560:SF3">
    <property type="entry name" value="TRIGGER FACTOR-LIKE PROTEIN TIG, CHLOROPLASTIC"/>
    <property type="match status" value="1"/>
</dbReference>
<dbReference type="Pfam" id="PF00254">
    <property type="entry name" value="FKBP_C"/>
    <property type="match status" value="1"/>
</dbReference>
<dbReference type="Pfam" id="PF05698">
    <property type="entry name" value="Trigger_C"/>
    <property type="match status" value="1"/>
</dbReference>
<dbReference type="Pfam" id="PF05697">
    <property type="entry name" value="Trigger_N"/>
    <property type="match status" value="1"/>
</dbReference>
<dbReference type="PIRSF" id="PIRSF003095">
    <property type="entry name" value="Trigger_factor"/>
    <property type="match status" value="1"/>
</dbReference>
<dbReference type="SUPFAM" id="SSF54534">
    <property type="entry name" value="FKBP-like"/>
    <property type="match status" value="1"/>
</dbReference>
<dbReference type="SUPFAM" id="SSF109998">
    <property type="entry name" value="Triger factor/SurA peptide-binding domain-like"/>
    <property type="match status" value="1"/>
</dbReference>
<dbReference type="SUPFAM" id="SSF102735">
    <property type="entry name" value="Trigger factor ribosome-binding domain"/>
    <property type="match status" value="1"/>
</dbReference>
<dbReference type="PROSITE" id="PS50059">
    <property type="entry name" value="FKBP_PPIASE"/>
    <property type="match status" value="1"/>
</dbReference>
<protein>
    <recommendedName>
        <fullName evidence="1">Trigger factor</fullName>
        <shortName evidence="1">TF</shortName>
        <ecNumber evidence="1">5.2.1.8</ecNumber>
    </recommendedName>
    <alternativeName>
        <fullName evidence="1">PPIase</fullName>
    </alternativeName>
</protein>
<gene>
    <name evidence="1" type="primary">tig</name>
    <name type="ordered locus">UPA3_0363</name>
</gene>
<reference key="1">
    <citation type="submission" date="2008-02" db="EMBL/GenBank/DDBJ databases">
        <title>Genome sequence of Ureaplasma parvum serovar 3.</title>
        <authorList>
            <person name="Methe B.A."/>
            <person name="Glass J."/>
            <person name="Waites K."/>
            <person name="Shrivastava S."/>
        </authorList>
    </citation>
    <scope>NUCLEOTIDE SEQUENCE [LARGE SCALE GENOMIC DNA]</scope>
    <source>
        <strain>ATCC 27815 / 27 / NCTC 11736</strain>
    </source>
</reference>
<accession>B1AIY6</accession>
<sequence>MKLLNKIKNENAIEFQILIEKSEWEKKHKESFEKIAKKTASKLKIPGFRPGKVPVEEAKKHVNEIEVFETTTNDLIPQVLTFLEQDESFINDDSETVDTPSVDILDFKDGELSLKVVYDLYPVATIESYNDLILTPIVNEAFEHEVNAEIEHALNSKSQRRVKDDNEFIEKGDEVRFDFKGMIDSVPFEGGSAKDHLLTIGSNQFIPGFEDQMIGLKKDERKNINVKFPDDYHATDLAGKAAVFEVFIKEITNVKPQELNDEFAKSFNLPNVNTVQELKDYIHNQIVLAKQEKNSERAWLEIAQQLLAKAKITPIPQSLIDREVSTLRQQVLSQLSQYKIELKQYLEFSKKSEAQFQEDLIRQAKETITLALLVDDIAETQNIVVSDEEVKERVAEMAKLYQGEEQAVIEQLSKNPDAVKEFLLHKKVVNYLIDLNKNNQPKNTTLSSK</sequence>